<comment type="function">
    <text evidence="1">This protein is one of the early assembly proteins of the 50S ribosomal subunit, although it is not seen to bind rRNA by itself. It is important during the early stages of 50S assembly.</text>
</comment>
<comment type="subunit">
    <text evidence="1">Part of the 50S ribosomal subunit.</text>
</comment>
<comment type="similarity">
    <text evidence="1">Belongs to the universal ribosomal protein uL13 family.</text>
</comment>
<gene>
    <name evidence="1" type="primary">rplM</name>
    <name type="ordered locus">Pnuc_1886</name>
</gene>
<feature type="chain" id="PRO_1000087097" description="Large ribosomal subunit protein uL13">
    <location>
        <begin position="1"/>
        <end position="142"/>
    </location>
</feature>
<dbReference type="EMBL" id="CP000655">
    <property type="protein sequence ID" value="ABP35098.1"/>
    <property type="molecule type" value="Genomic_DNA"/>
</dbReference>
<dbReference type="RefSeq" id="WP_011903721.1">
    <property type="nucleotide sequence ID" value="NC_009379.1"/>
</dbReference>
<dbReference type="SMR" id="A4T034"/>
<dbReference type="GeneID" id="31482276"/>
<dbReference type="KEGG" id="pnu:Pnuc_1886"/>
<dbReference type="eggNOG" id="COG0102">
    <property type="taxonomic scope" value="Bacteria"/>
</dbReference>
<dbReference type="HOGENOM" id="CLU_082184_2_2_4"/>
<dbReference type="Proteomes" id="UP000000231">
    <property type="component" value="Chromosome"/>
</dbReference>
<dbReference type="GO" id="GO:0022625">
    <property type="term" value="C:cytosolic large ribosomal subunit"/>
    <property type="evidence" value="ECO:0007669"/>
    <property type="project" value="TreeGrafter"/>
</dbReference>
<dbReference type="GO" id="GO:0003729">
    <property type="term" value="F:mRNA binding"/>
    <property type="evidence" value="ECO:0007669"/>
    <property type="project" value="TreeGrafter"/>
</dbReference>
<dbReference type="GO" id="GO:0003735">
    <property type="term" value="F:structural constituent of ribosome"/>
    <property type="evidence" value="ECO:0007669"/>
    <property type="project" value="InterPro"/>
</dbReference>
<dbReference type="GO" id="GO:0017148">
    <property type="term" value="P:negative regulation of translation"/>
    <property type="evidence" value="ECO:0007669"/>
    <property type="project" value="TreeGrafter"/>
</dbReference>
<dbReference type="GO" id="GO:0006412">
    <property type="term" value="P:translation"/>
    <property type="evidence" value="ECO:0007669"/>
    <property type="project" value="UniProtKB-UniRule"/>
</dbReference>
<dbReference type="CDD" id="cd00392">
    <property type="entry name" value="Ribosomal_L13"/>
    <property type="match status" value="1"/>
</dbReference>
<dbReference type="FunFam" id="3.90.1180.10:FF:000001">
    <property type="entry name" value="50S ribosomal protein L13"/>
    <property type="match status" value="1"/>
</dbReference>
<dbReference type="Gene3D" id="3.90.1180.10">
    <property type="entry name" value="Ribosomal protein L13"/>
    <property type="match status" value="1"/>
</dbReference>
<dbReference type="HAMAP" id="MF_01366">
    <property type="entry name" value="Ribosomal_uL13"/>
    <property type="match status" value="1"/>
</dbReference>
<dbReference type="InterPro" id="IPR005822">
    <property type="entry name" value="Ribosomal_uL13"/>
</dbReference>
<dbReference type="InterPro" id="IPR005823">
    <property type="entry name" value="Ribosomal_uL13_bac-type"/>
</dbReference>
<dbReference type="InterPro" id="IPR036899">
    <property type="entry name" value="Ribosomal_uL13_sf"/>
</dbReference>
<dbReference type="NCBIfam" id="TIGR01066">
    <property type="entry name" value="rplM_bact"/>
    <property type="match status" value="1"/>
</dbReference>
<dbReference type="PANTHER" id="PTHR11545:SF2">
    <property type="entry name" value="LARGE RIBOSOMAL SUBUNIT PROTEIN UL13M"/>
    <property type="match status" value="1"/>
</dbReference>
<dbReference type="PANTHER" id="PTHR11545">
    <property type="entry name" value="RIBOSOMAL PROTEIN L13"/>
    <property type="match status" value="1"/>
</dbReference>
<dbReference type="Pfam" id="PF00572">
    <property type="entry name" value="Ribosomal_L13"/>
    <property type="match status" value="1"/>
</dbReference>
<dbReference type="PIRSF" id="PIRSF002181">
    <property type="entry name" value="Ribosomal_L13"/>
    <property type="match status" value="1"/>
</dbReference>
<dbReference type="SUPFAM" id="SSF52161">
    <property type="entry name" value="Ribosomal protein L13"/>
    <property type="match status" value="1"/>
</dbReference>
<proteinExistence type="inferred from homology"/>
<reference key="1">
    <citation type="journal article" date="2012" name="Stand. Genomic Sci.">
        <title>Complete genome sequence of Polynucleobacter necessarius subsp. asymbioticus type strain (QLW-P1DMWA-1(T)).</title>
        <authorList>
            <person name="Meincke L."/>
            <person name="Copeland A."/>
            <person name="Lapidus A."/>
            <person name="Lucas S."/>
            <person name="Berry K.W."/>
            <person name="Del Rio T.G."/>
            <person name="Hammon N."/>
            <person name="Dalin E."/>
            <person name="Tice H."/>
            <person name="Pitluck S."/>
            <person name="Richardson P."/>
            <person name="Bruce D."/>
            <person name="Goodwin L."/>
            <person name="Han C."/>
            <person name="Tapia R."/>
            <person name="Detter J.C."/>
            <person name="Schmutz J."/>
            <person name="Brettin T."/>
            <person name="Larimer F."/>
            <person name="Land M."/>
            <person name="Hauser L."/>
            <person name="Kyrpides N.C."/>
            <person name="Ivanova N."/>
            <person name="Goker M."/>
            <person name="Woyke T."/>
            <person name="Wu Q.L."/>
            <person name="Pockl M."/>
            <person name="Hahn M.W."/>
            <person name="Klenk H.P."/>
        </authorList>
    </citation>
    <scope>NUCLEOTIDE SEQUENCE [LARGE SCALE GENOMIC DNA]</scope>
    <source>
        <strain>DSM 18221 / CIP 109841 / QLW-P1DMWA-1</strain>
    </source>
</reference>
<keyword id="KW-1185">Reference proteome</keyword>
<keyword id="KW-0687">Ribonucleoprotein</keyword>
<keyword id="KW-0689">Ribosomal protein</keyword>
<accession>A4T034</accession>
<evidence type="ECO:0000255" key="1">
    <source>
        <dbReference type="HAMAP-Rule" id="MF_01366"/>
    </source>
</evidence>
<evidence type="ECO:0000305" key="2"/>
<sequence length="142" mass="15787">MKTFSAKSHEVVHEWFVIDATDKVLGRVASEVALRLRGKHKPEYTPHVDTGDFIVVINSSKLRVTGTKGLNKIYYRHSGYPGGISSTNFDKMQDRFPGRALEKAVKGMLPKGPLGYAMIKKLKVYGDANHPHAAQQPKALEI</sequence>
<protein>
    <recommendedName>
        <fullName evidence="1">Large ribosomal subunit protein uL13</fullName>
    </recommendedName>
    <alternativeName>
        <fullName evidence="2">50S ribosomal protein L13</fullName>
    </alternativeName>
</protein>
<name>RL13_POLAQ</name>
<organism>
    <name type="scientific">Polynucleobacter asymbioticus (strain DSM 18221 / CIP 109841 / QLW-P1DMWA-1)</name>
    <name type="common">Polynucleobacter necessarius subsp. asymbioticus</name>
    <dbReference type="NCBI Taxonomy" id="312153"/>
    <lineage>
        <taxon>Bacteria</taxon>
        <taxon>Pseudomonadati</taxon>
        <taxon>Pseudomonadota</taxon>
        <taxon>Betaproteobacteria</taxon>
        <taxon>Burkholderiales</taxon>
        <taxon>Burkholderiaceae</taxon>
        <taxon>Polynucleobacter</taxon>
    </lineage>
</organism>